<keyword id="KW-0687">Ribonucleoprotein</keyword>
<keyword id="KW-0689">Ribosomal protein</keyword>
<keyword id="KW-0694">RNA-binding</keyword>
<keyword id="KW-0699">rRNA-binding</keyword>
<keyword id="KW-0820">tRNA-binding</keyword>
<protein>
    <recommendedName>
        <fullName evidence="1">Large ribosomal subunit protein uL5</fullName>
    </recommendedName>
    <alternativeName>
        <fullName evidence="2">50S ribosomal protein L5</fullName>
    </alternativeName>
</protein>
<proteinExistence type="inferred from homology"/>
<organism>
    <name type="scientific">Rickettsia conorii (strain ATCC VR-613 / Malish 7)</name>
    <dbReference type="NCBI Taxonomy" id="272944"/>
    <lineage>
        <taxon>Bacteria</taxon>
        <taxon>Pseudomonadati</taxon>
        <taxon>Pseudomonadota</taxon>
        <taxon>Alphaproteobacteria</taxon>
        <taxon>Rickettsiales</taxon>
        <taxon>Rickettsiaceae</taxon>
        <taxon>Rickettsieae</taxon>
        <taxon>Rickettsia</taxon>
        <taxon>spotted fever group</taxon>
    </lineage>
</organism>
<reference key="1">
    <citation type="journal article" date="2001" name="Science">
        <title>Mechanisms of evolution in Rickettsia conorii and R. prowazekii.</title>
        <authorList>
            <person name="Ogata H."/>
            <person name="Audic S."/>
            <person name="Renesto-Audiffren P."/>
            <person name="Fournier P.-E."/>
            <person name="Barbe V."/>
            <person name="Samson D."/>
            <person name="Roux V."/>
            <person name="Cossart P."/>
            <person name="Weissenbach J."/>
            <person name="Claverie J.-M."/>
            <person name="Raoult D."/>
        </authorList>
    </citation>
    <scope>NUCLEOTIDE SEQUENCE [LARGE SCALE GENOMIC DNA]</scope>
    <source>
        <strain>ATCC VR-613 / Malish 7</strain>
    </source>
</reference>
<dbReference type="EMBL" id="AE006914">
    <property type="protein sequence ID" value="AAL03532.1"/>
    <property type="molecule type" value="Genomic_DNA"/>
</dbReference>
<dbReference type="PIR" id="B97824">
    <property type="entry name" value="B97824"/>
</dbReference>
<dbReference type="RefSeq" id="WP_010977582.1">
    <property type="nucleotide sequence ID" value="NC_003103.1"/>
</dbReference>
<dbReference type="SMR" id="Q92GX8"/>
<dbReference type="GeneID" id="928140"/>
<dbReference type="KEGG" id="rco:RC0994"/>
<dbReference type="HOGENOM" id="CLU_061015_2_1_5"/>
<dbReference type="Proteomes" id="UP000000816">
    <property type="component" value="Chromosome"/>
</dbReference>
<dbReference type="GO" id="GO:1990904">
    <property type="term" value="C:ribonucleoprotein complex"/>
    <property type="evidence" value="ECO:0007669"/>
    <property type="project" value="UniProtKB-KW"/>
</dbReference>
<dbReference type="GO" id="GO:0005840">
    <property type="term" value="C:ribosome"/>
    <property type="evidence" value="ECO:0007669"/>
    <property type="project" value="UniProtKB-KW"/>
</dbReference>
<dbReference type="GO" id="GO:0019843">
    <property type="term" value="F:rRNA binding"/>
    <property type="evidence" value="ECO:0007669"/>
    <property type="project" value="UniProtKB-UniRule"/>
</dbReference>
<dbReference type="GO" id="GO:0003735">
    <property type="term" value="F:structural constituent of ribosome"/>
    <property type="evidence" value="ECO:0007669"/>
    <property type="project" value="InterPro"/>
</dbReference>
<dbReference type="GO" id="GO:0000049">
    <property type="term" value="F:tRNA binding"/>
    <property type="evidence" value="ECO:0007669"/>
    <property type="project" value="UniProtKB-UniRule"/>
</dbReference>
<dbReference type="GO" id="GO:0006412">
    <property type="term" value="P:translation"/>
    <property type="evidence" value="ECO:0007669"/>
    <property type="project" value="UniProtKB-UniRule"/>
</dbReference>
<dbReference type="FunFam" id="3.30.1440.10:FF:000001">
    <property type="entry name" value="50S ribosomal protein L5"/>
    <property type="match status" value="1"/>
</dbReference>
<dbReference type="Gene3D" id="3.30.1440.10">
    <property type="match status" value="1"/>
</dbReference>
<dbReference type="HAMAP" id="MF_01333_B">
    <property type="entry name" value="Ribosomal_uL5_B"/>
    <property type="match status" value="1"/>
</dbReference>
<dbReference type="InterPro" id="IPR002132">
    <property type="entry name" value="Ribosomal_uL5"/>
</dbReference>
<dbReference type="InterPro" id="IPR020930">
    <property type="entry name" value="Ribosomal_uL5_bac-type"/>
</dbReference>
<dbReference type="InterPro" id="IPR031309">
    <property type="entry name" value="Ribosomal_uL5_C"/>
</dbReference>
<dbReference type="InterPro" id="IPR020929">
    <property type="entry name" value="Ribosomal_uL5_CS"/>
</dbReference>
<dbReference type="InterPro" id="IPR022803">
    <property type="entry name" value="Ribosomal_uL5_dom_sf"/>
</dbReference>
<dbReference type="InterPro" id="IPR031310">
    <property type="entry name" value="Ribosomal_uL5_N"/>
</dbReference>
<dbReference type="NCBIfam" id="NF000585">
    <property type="entry name" value="PRK00010.1"/>
    <property type="match status" value="1"/>
</dbReference>
<dbReference type="PANTHER" id="PTHR11994">
    <property type="entry name" value="60S RIBOSOMAL PROTEIN L11-RELATED"/>
    <property type="match status" value="1"/>
</dbReference>
<dbReference type="Pfam" id="PF00281">
    <property type="entry name" value="Ribosomal_L5"/>
    <property type="match status" value="1"/>
</dbReference>
<dbReference type="Pfam" id="PF00673">
    <property type="entry name" value="Ribosomal_L5_C"/>
    <property type="match status" value="1"/>
</dbReference>
<dbReference type="PIRSF" id="PIRSF002161">
    <property type="entry name" value="Ribosomal_L5"/>
    <property type="match status" value="1"/>
</dbReference>
<dbReference type="SUPFAM" id="SSF55282">
    <property type="entry name" value="RL5-like"/>
    <property type="match status" value="1"/>
</dbReference>
<dbReference type="PROSITE" id="PS00358">
    <property type="entry name" value="RIBOSOMAL_L5"/>
    <property type="match status" value="1"/>
</dbReference>
<name>RL5_RICCN</name>
<gene>
    <name evidence="1" type="primary">rplE</name>
    <name type="ordered locus">RC0994</name>
</gene>
<evidence type="ECO:0000255" key="1">
    <source>
        <dbReference type="HAMAP-Rule" id="MF_01333"/>
    </source>
</evidence>
<evidence type="ECO:0000305" key="2"/>
<accession>Q92GX8</accession>
<comment type="function">
    <text evidence="1">This is one of the proteins that bind and probably mediate the attachment of the 5S RNA into the large ribosomal subunit, where it forms part of the central protuberance. In the 70S ribosome it contacts protein S13 of the 30S subunit (bridge B1b), connecting the 2 subunits; this bridge is implicated in subunit movement. Contacts the P site tRNA; the 5S rRNA and some of its associated proteins might help stabilize positioning of ribosome-bound tRNAs.</text>
</comment>
<comment type="subunit">
    <text evidence="1">Part of the 50S ribosomal subunit; part of the 5S rRNA/L5/L18/L25 subcomplex. Contacts the 5S rRNA and the P site tRNA. Forms a bridge to the 30S subunit in the 70S ribosome.</text>
</comment>
<comment type="similarity">
    <text evidence="1">Belongs to the universal ribosomal protein uL5 family.</text>
</comment>
<sequence>MLRFKELYQQKIIENLQKKFSYKNKHEIPQIKKIVINMGVGEATADSKVINNAVNDLTLISGQKPVVTLARKSIATFKLRENMKIGCKVTLRKDRMYDFLERLVIVALPRVKEFRGFSYKSFDGKGNFTFGLKEQIVFPEINYDKIDTIRGMDITIVTSAKTDQESKFLLSGFNLPFYN</sequence>
<feature type="chain" id="PRO_0000124978" description="Large ribosomal subunit protein uL5">
    <location>
        <begin position="1"/>
        <end position="179"/>
    </location>
</feature>